<name>KIB1_ARATH</name>
<feature type="chain" id="PRO_0000283242" description="F-box/kelch-repeat protein KIB1">
    <location>
        <begin position="1"/>
        <end position="382"/>
    </location>
</feature>
<feature type="domain" description="F-box" evidence="1">
    <location>
        <begin position="22"/>
        <end position="69"/>
    </location>
</feature>
<feature type="repeat" description="Kelch 1" evidence="1">
    <location>
        <begin position="73"/>
        <end position="117"/>
    </location>
</feature>
<feature type="repeat" description="Kelch 2" evidence="1">
    <location>
        <begin position="159"/>
        <end position="209"/>
    </location>
</feature>
<feature type="repeat" description="Kelch 3" evidence="1">
    <location>
        <begin position="259"/>
        <end position="306"/>
    </location>
</feature>
<accession>Q9SU05</accession>
<keyword id="KW-1070">Brassinosteroid signaling pathway</keyword>
<keyword id="KW-0963">Cytoplasm</keyword>
<keyword id="KW-0880">Kelch repeat</keyword>
<keyword id="KW-0539">Nucleus</keyword>
<keyword id="KW-1185">Reference proteome</keyword>
<keyword id="KW-0677">Repeat</keyword>
<keyword id="KW-0833">Ubl conjugation pathway</keyword>
<organism>
    <name type="scientific">Arabidopsis thaliana</name>
    <name type="common">Mouse-ear cress</name>
    <dbReference type="NCBI Taxonomy" id="3702"/>
    <lineage>
        <taxon>Eukaryota</taxon>
        <taxon>Viridiplantae</taxon>
        <taxon>Streptophyta</taxon>
        <taxon>Embryophyta</taxon>
        <taxon>Tracheophyta</taxon>
        <taxon>Spermatophyta</taxon>
        <taxon>Magnoliopsida</taxon>
        <taxon>eudicotyledons</taxon>
        <taxon>Gunneridae</taxon>
        <taxon>Pentapetalae</taxon>
        <taxon>rosids</taxon>
        <taxon>malvids</taxon>
        <taxon>Brassicales</taxon>
        <taxon>Brassicaceae</taxon>
        <taxon>Camelineae</taxon>
        <taxon>Arabidopsis</taxon>
    </lineage>
</organism>
<dbReference type="EMBL" id="AL049640">
    <property type="protein sequence ID" value="CAB40998.1"/>
    <property type="molecule type" value="Genomic_DNA"/>
</dbReference>
<dbReference type="EMBL" id="AL161534">
    <property type="protein sequence ID" value="CAB78323.1"/>
    <property type="molecule type" value="Genomic_DNA"/>
</dbReference>
<dbReference type="EMBL" id="CP002687">
    <property type="protein sequence ID" value="AEE83187.1"/>
    <property type="molecule type" value="Genomic_DNA"/>
</dbReference>
<dbReference type="PIR" id="T06639">
    <property type="entry name" value="T06639"/>
</dbReference>
<dbReference type="RefSeq" id="NP_193017.1">
    <property type="nucleotide sequence ID" value="NM_117350.1"/>
</dbReference>
<dbReference type="SMR" id="Q9SU05"/>
<dbReference type="FunCoup" id="Q9SU05">
    <property type="interactions" value="31"/>
</dbReference>
<dbReference type="STRING" id="3702.Q9SU05"/>
<dbReference type="iPTMnet" id="Q9SU05"/>
<dbReference type="PaxDb" id="3702-AT4G12810.1"/>
<dbReference type="EnsemblPlants" id="AT4G12810.1">
    <property type="protein sequence ID" value="AT4G12810.1"/>
    <property type="gene ID" value="AT4G12810"/>
</dbReference>
<dbReference type="GeneID" id="826893"/>
<dbReference type="Gramene" id="AT4G12810.1">
    <property type="protein sequence ID" value="AT4G12810.1"/>
    <property type="gene ID" value="AT4G12810"/>
</dbReference>
<dbReference type="KEGG" id="ath:AT4G12810"/>
<dbReference type="Araport" id="AT4G12810"/>
<dbReference type="TAIR" id="AT4G12810">
    <property type="gene designation" value="KIB1"/>
</dbReference>
<dbReference type="eggNOG" id="ENOG502S0MJ">
    <property type="taxonomic scope" value="Eukaryota"/>
</dbReference>
<dbReference type="HOGENOM" id="CLU_019286_7_1_1"/>
<dbReference type="InParanoid" id="Q9SU05"/>
<dbReference type="OMA" id="YHFRSAN"/>
<dbReference type="PhylomeDB" id="Q9SU05"/>
<dbReference type="PRO" id="PR:Q9SU05"/>
<dbReference type="Proteomes" id="UP000006548">
    <property type="component" value="Chromosome 4"/>
</dbReference>
<dbReference type="ExpressionAtlas" id="Q9SU05">
    <property type="expression patterns" value="differential"/>
</dbReference>
<dbReference type="GO" id="GO:0005737">
    <property type="term" value="C:cytoplasm"/>
    <property type="evidence" value="ECO:0000314"/>
    <property type="project" value="UniProtKB"/>
</dbReference>
<dbReference type="GO" id="GO:0005730">
    <property type="term" value="C:nucleolus"/>
    <property type="evidence" value="ECO:0000314"/>
    <property type="project" value="UniProtKB"/>
</dbReference>
<dbReference type="GO" id="GO:0019005">
    <property type="term" value="C:SCF ubiquitin ligase complex"/>
    <property type="evidence" value="ECO:0000353"/>
    <property type="project" value="TAIR"/>
</dbReference>
<dbReference type="GO" id="GO:0061630">
    <property type="term" value="F:ubiquitin protein ligase activity"/>
    <property type="evidence" value="ECO:0000314"/>
    <property type="project" value="TAIR"/>
</dbReference>
<dbReference type="GO" id="GO:0009742">
    <property type="term" value="P:brassinosteroid mediated signaling pathway"/>
    <property type="evidence" value="ECO:0000316"/>
    <property type="project" value="TAIR"/>
</dbReference>
<dbReference type="GO" id="GO:1900459">
    <property type="term" value="P:positive regulation of brassinosteroid mediated signaling pathway"/>
    <property type="evidence" value="ECO:0000315"/>
    <property type="project" value="UniProtKB"/>
</dbReference>
<dbReference type="GO" id="GO:0016567">
    <property type="term" value="P:protein ubiquitination"/>
    <property type="evidence" value="ECO:0000314"/>
    <property type="project" value="TAIR"/>
</dbReference>
<dbReference type="GO" id="GO:0006511">
    <property type="term" value="P:ubiquitin-dependent protein catabolic process"/>
    <property type="evidence" value="ECO:0000314"/>
    <property type="project" value="UniProtKB"/>
</dbReference>
<dbReference type="InterPro" id="IPR050942">
    <property type="entry name" value="F-box_BR-signaling"/>
</dbReference>
<dbReference type="InterPro" id="IPR001810">
    <property type="entry name" value="F-box_dom"/>
</dbReference>
<dbReference type="InterPro" id="IPR011043">
    <property type="entry name" value="Gal_Oxase/kelch_b-propeller"/>
</dbReference>
<dbReference type="InterPro" id="IPR005174">
    <property type="entry name" value="KIB1-4_b-propeller"/>
</dbReference>
<dbReference type="PANTHER" id="PTHR44259:SF15">
    <property type="entry name" value="F-BOX PROTEIN KIB2-RELATED"/>
    <property type="match status" value="1"/>
</dbReference>
<dbReference type="PANTHER" id="PTHR44259">
    <property type="entry name" value="OS07G0183000 PROTEIN-RELATED"/>
    <property type="match status" value="1"/>
</dbReference>
<dbReference type="Pfam" id="PF03478">
    <property type="entry name" value="Beta-prop_KIB1-4"/>
    <property type="match status" value="1"/>
</dbReference>
<dbReference type="Pfam" id="PF00646">
    <property type="entry name" value="F-box"/>
    <property type="match status" value="1"/>
</dbReference>
<dbReference type="SUPFAM" id="SSF50965">
    <property type="entry name" value="Galactose oxidase, central domain"/>
    <property type="match status" value="1"/>
</dbReference>
<gene>
    <name evidence="3" type="primary">KIB1</name>
    <name evidence="4" type="ordered locus">At4g12810</name>
    <name evidence="5" type="ORF">T20K18.160</name>
</gene>
<evidence type="ECO:0000255" key="1"/>
<evidence type="ECO:0000269" key="2">
    <source>
    </source>
</evidence>
<evidence type="ECO:0000303" key="3">
    <source>
    </source>
</evidence>
<evidence type="ECO:0000312" key="4">
    <source>
        <dbReference type="Araport" id="AT4G12810"/>
    </source>
</evidence>
<evidence type="ECO:0000312" key="5">
    <source>
        <dbReference type="EMBL" id="CAB40998.1"/>
    </source>
</evidence>
<proteinExistence type="evidence at protein level"/>
<sequence>MTHKKQKKEMSDSEKKTFNEDSKHSILAVDLVRLILERLSFVDFHRARCVSSIWYIASKTVIGVTNPTTPWLILFPKGDVEIKKDSCKLYDPHENKTYIVRDLGFDLVTSRCLASSGSWFLMLDHRTEFHLLNLFTRVRIPLPSLESTRGSDIKIGNAVLWVDEQRKDYLVVWNISSLFGYHKKGDDRWKVFKPLENERCIIAMVFKENKLYVLSVDGNVDVFYFSGNDSPVRCATLPSSPLRKGHKVVVTLSGEVLIIVAKVEPYPRTRLCFFAVYKMDPKSSRWETIKSLAGEALILDLGITVEAKVMKNCIYFSNDQFHRYNENSLWNVSNKSGVFVYHFRSANVVQLVELLTASSRTSKILFKDARCFFPTFTSKWLL</sequence>
<comment type="function">
    <text evidence="2">Component of SCF(ASK-cullin-F-box) E3 ubiquitin ligase complexes, which may mediate the ubiquitination and subsequent proteasomal degradation of target proteins. Required for brassinosteroid (BR) signal transduction. Mediates ASK7/BIN2/SK21 inactivation both by competing with substrate binding (e.g. BZR1) and by promoting its ubiquitination and subsequent proteasomal degradation.</text>
</comment>
<comment type="subunit">
    <text evidence="2">Part of a SCF (SKP1-cullin-F-box) protein ligase complex. Binds directly to several GSK3 family proteins such as SKP1A/ASK1, ASK1/SK11, ASK3/SK12, ASK5/SK13, ASK7/BIN2/SK21, ASK9/SK22 and ASK6/SK23. Interacts with ASK7/BIN2/SK21 in a brassinosteroid (BR)-dependent manner.</text>
</comment>
<comment type="subcellular location">
    <subcellularLocation>
        <location evidence="2">Cytoplasm</location>
    </subcellularLocation>
    <subcellularLocation>
        <location evidence="2">Nucleus</location>
        <location evidence="2">Nucleolus</location>
    </subcellularLocation>
    <text evidence="2">Mostly localized in the nucleolus, and, to a lower extent, in the cytoplasm.</text>
</comment>
<comment type="tissue specificity">
    <text evidence="2">Expressed in seedlings, leaves, stems, flower buds and flowers.</text>
</comment>
<comment type="disruption phenotype">
    <text evidence="2">Abolished brassinosteroid (BR)-induced ASK7/BIN2/SK21 degradation, and severe BR-insensitivity. Suppression of the constitutive BR-response phenotype in the dominant mutant bzr1-1D, and accumulation of phosphorylated BZR1.</text>
</comment>
<protein>
    <recommendedName>
        <fullName evidence="3">F-box/kelch-repeat protein KIB1</fullName>
    </recommendedName>
    <alternativeName>
        <fullName evidence="3">Protein KINK SUPPRESSED IN BZR1-1D 1</fullName>
    </alternativeName>
</protein>
<reference key="1">
    <citation type="journal article" date="1999" name="Nature">
        <title>Sequence and analysis of chromosome 4 of the plant Arabidopsis thaliana.</title>
        <authorList>
            <person name="Mayer K.F.X."/>
            <person name="Schueller C."/>
            <person name="Wambutt R."/>
            <person name="Murphy G."/>
            <person name="Volckaert G."/>
            <person name="Pohl T."/>
            <person name="Duesterhoeft A."/>
            <person name="Stiekema W."/>
            <person name="Entian K.-D."/>
            <person name="Terryn N."/>
            <person name="Harris B."/>
            <person name="Ansorge W."/>
            <person name="Brandt P."/>
            <person name="Grivell L.A."/>
            <person name="Rieger M."/>
            <person name="Weichselgartner M."/>
            <person name="de Simone V."/>
            <person name="Obermaier B."/>
            <person name="Mache R."/>
            <person name="Mueller M."/>
            <person name="Kreis M."/>
            <person name="Delseny M."/>
            <person name="Puigdomenech P."/>
            <person name="Watson M."/>
            <person name="Schmidtheini T."/>
            <person name="Reichert B."/>
            <person name="Portetelle D."/>
            <person name="Perez-Alonso M."/>
            <person name="Boutry M."/>
            <person name="Bancroft I."/>
            <person name="Vos P."/>
            <person name="Hoheisel J."/>
            <person name="Zimmermann W."/>
            <person name="Wedler H."/>
            <person name="Ridley P."/>
            <person name="Langham S.-A."/>
            <person name="McCullagh B."/>
            <person name="Bilham L."/>
            <person name="Robben J."/>
            <person name="van der Schueren J."/>
            <person name="Grymonprez B."/>
            <person name="Chuang Y.-J."/>
            <person name="Vandenbussche F."/>
            <person name="Braeken M."/>
            <person name="Weltjens I."/>
            <person name="Voet M."/>
            <person name="Bastiaens I."/>
            <person name="Aert R."/>
            <person name="Defoor E."/>
            <person name="Weitzenegger T."/>
            <person name="Bothe G."/>
            <person name="Ramsperger U."/>
            <person name="Hilbert H."/>
            <person name="Braun M."/>
            <person name="Holzer E."/>
            <person name="Brandt A."/>
            <person name="Peters S."/>
            <person name="van Staveren M."/>
            <person name="Dirkse W."/>
            <person name="Mooijman P."/>
            <person name="Klein Lankhorst R."/>
            <person name="Rose M."/>
            <person name="Hauf J."/>
            <person name="Koetter P."/>
            <person name="Berneiser S."/>
            <person name="Hempel S."/>
            <person name="Feldpausch M."/>
            <person name="Lamberth S."/>
            <person name="Van den Daele H."/>
            <person name="De Keyser A."/>
            <person name="Buysshaert C."/>
            <person name="Gielen J."/>
            <person name="Villarroel R."/>
            <person name="De Clercq R."/>
            <person name="van Montagu M."/>
            <person name="Rogers J."/>
            <person name="Cronin A."/>
            <person name="Quail M.A."/>
            <person name="Bray-Allen S."/>
            <person name="Clark L."/>
            <person name="Doggett J."/>
            <person name="Hall S."/>
            <person name="Kay M."/>
            <person name="Lennard N."/>
            <person name="McLay K."/>
            <person name="Mayes R."/>
            <person name="Pettett A."/>
            <person name="Rajandream M.A."/>
            <person name="Lyne M."/>
            <person name="Benes V."/>
            <person name="Rechmann S."/>
            <person name="Borkova D."/>
            <person name="Bloecker H."/>
            <person name="Scharfe M."/>
            <person name="Grimm M."/>
            <person name="Loehnert T.-H."/>
            <person name="Dose S."/>
            <person name="de Haan M."/>
            <person name="Maarse A.C."/>
            <person name="Schaefer M."/>
            <person name="Mueller-Auer S."/>
            <person name="Gabel C."/>
            <person name="Fuchs M."/>
            <person name="Fartmann B."/>
            <person name="Granderath K."/>
            <person name="Dauner D."/>
            <person name="Herzl A."/>
            <person name="Neumann S."/>
            <person name="Argiriou A."/>
            <person name="Vitale D."/>
            <person name="Liguori R."/>
            <person name="Piravandi E."/>
            <person name="Massenet O."/>
            <person name="Quigley F."/>
            <person name="Clabauld G."/>
            <person name="Muendlein A."/>
            <person name="Felber R."/>
            <person name="Schnabl S."/>
            <person name="Hiller R."/>
            <person name="Schmidt W."/>
            <person name="Lecharny A."/>
            <person name="Aubourg S."/>
            <person name="Chefdor F."/>
            <person name="Cooke R."/>
            <person name="Berger C."/>
            <person name="Monfort A."/>
            <person name="Casacuberta E."/>
            <person name="Gibbons T."/>
            <person name="Weber N."/>
            <person name="Vandenbol M."/>
            <person name="Bargues M."/>
            <person name="Terol J."/>
            <person name="Torres A."/>
            <person name="Perez-Perez A."/>
            <person name="Purnelle B."/>
            <person name="Bent E."/>
            <person name="Johnson S."/>
            <person name="Tacon D."/>
            <person name="Jesse T."/>
            <person name="Heijnen L."/>
            <person name="Schwarz S."/>
            <person name="Scholler P."/>
            <person name="Heber S."/>
            <person name="Francs P."/>
            <person name="Bielke C."/>
            <person name="Frishman D."/>
            <person name="Haase D."/>
            <person name="Lemcke K."/>
            <person name="Mewes H.-W."/>
            <person name="Stocker S."/>
            <person name="Zaccaria P."/>
            <person name="Bevan M."/>
            <person name="Wilson R.K."/>
            <person name="de la Bastide M."/>
            <person name="Habermann K."/>
            <person name="Parnell L."/>
            <person name="Dedhia N."/>
            <person name="Gnoj L."/>
            <person name="Schutz K."/>
            <person name="Huang E."/>
            <person name="Spiegel L."/>
            <person name="Sekhon M."/>
            <person name="Murray J."/>
            <person name="Sheet P."/>
            <person name="Cordes M."/>
            <person name="Abu-Threideh J."/>
            <person name="Stoneking T."/>
            <person name="Kalicki J."/>
            <person name="Graves T."/>
            <person name="Harmon G."/>
            <person name="Edwards J."/>
            <person name="Latreille P."/>
            <person name="Courtney L."/>
            <person name="Cloud J."/>
            <person name="Abbott A."/>
            <person name="Scott K."/>
            <person name="Johnson D."/>
            <person name="Minx P."/>
            <person name="Bentley D."/>
            <person name="Fulton B."/>
            <person name="Miller N."/>
            <person name="Greco T."/>
            <person name="Kemp K."/>
            <person name="Kramer J."/>
            <person name="Fulton L."/>
            <person name="Mardis E."/>
            <person name="Dante M."/>
            <person name="Pepin K."/>
            <person name="Hillier L.W."/>
            <person name="Nelson J."/>
            <person name="Spieth J."/>
            <person name="Ryan E."/>
            <person name="Andrews S."/>
            <person name="Geisel C."/>
            <person name="Layman D."/>
            <person name="Du H."/>
            <person name="Ali J."/>
            <person name="Berghoff A."/>
            <person name="Jones K."/>
            <person name="Drone K."/>
            <person name="Cotton M."/>
            <person name="Joshu C."/>
            <person name="Antonoiu B."/>
            <person name="Zidanic M."/>
            <person name="Strong C."/>
            <person name="Sun H."/>
            <person name="Lamar B."/>
            <person name="Yordan C."/>
            <person name="Ma P."/>
            <person name="Zhong J."/>
            <person name="Preston R."/>
            <person name="Vil D."/>
            <person name="Shekher M."/>
            <person name="Matero A."/>
            <person name="Shah R."/>
            <person name="Swaby I.K."/>
            <person name="O'Shaughnessy A."/>
            <person name="Rodriguez M."/>
            <person name="Hoffman J."/>
            <person name="Till S."/>
            <person name="Granat S."/>
            <person name="Shohdy N."/>
            <person name="Hasegawa A."/>
            <person name="Hameed A."/>
            <person name="Lodhi M."/>
            <person name="Johnson A."/>
            <person name="Chen E."/>
            <person name="Marra M.A."/>
            <person name="Martienssen R."/>
            <person name="McCombie W.R."/>
        </authorList>
    </citation>
    <scope>NUCLEOTIDE SEQUENCE [LARGE SCALE GENOMIC DNA]</scope>
    <source>
        <strain>cv. Columbia</strain>
    </source>
</reference>
<reference key="2">
    <citation type="journal article" date="2017" name="Plant J.">
        <title>Araport11: a complete reannotation of the Arabidopsis thaliana reference genome.</title>
        <authorList>
            <person name="Cheng C.Y."/>
            <person name="Krishnakumar V."/>
            <person name="Chan A.P."/>
            <person name="Thibaud-Nissen F."/>
            <person name="Schobel S."/>
            <person name="Town C.D."/>
        </authorList>
    </citation>
    <scope>GENOME REANNOTATION</scope>
    <source>
        <strain>cv. Columbia</strain>
    </source>
</reference>
<reference key="3">
    <citation type="journal article" date="2017" name="Mol. Cell">
        <title>The F-box protein KIB1 mediates brassinosteroid-induced inactivation and degradation of GSK3-like kinases in Arabidopsis.</title>
        <authorList>
            <person name="Zhu J.-Y."/>
            <person name="Li Y."/>
            <person name="Cao D.-M."/>
            <person name="Yang H."/>
            <person name="Oh E."/>
            <person name="Bi Y."/>
            <person name="Zhu S."/>
            <person name="Wang Z.-Y."/>
        </authorList>
    </citation>
    <scope>FUNCTION</scope>
    <scope>DISRUPTION PHENOTYPE</scope>
    <scope>INTERACTION WITH SKP1A/ASK1; ASK1/SK11; ASK3/SK12; ASK5/SK13; ASK7/BIN2/SK21; ASK9/SK22 AND ASK6/SK23</scope>
    <scope>TISSUE SPECIFICITY</scope>
    <scope>SUBCELLULAR LOCATION</scope>
    <source>
        <strain>cv. Columbia</strain>
        <strain>cv. Wassilewskija</strain>
    </source>
</reference>